<gene>
    <name evidence="1" type="primary">secB</name>
    <name type="ordered locus">BceJ2315_07350</name>
    <name type="ORF">BCAL0742</name>
</gene>
<comment type="function">
    <text evidence="1">One of the proteins required for the normal export of preproteins out of the cell cytoplasm. It is a molecular chaperone that binds to a subset of precursor proteins, maintaining them in a translocation-competent state. It also specifically binds to its receptor SecA.</text>
</comment>
<comment type="subunit">
    <text evidence="1">Homotetramer, a dimer of dimers. One homotetramer interacts with 1 SecA dimer.</text>
</comment>
<comment type="subcellular location">
    <subcellularLocation>
        <location evidence="1">Cytoplasm</location>
    </subcellularLocation>
</comment>
<comment type="similarity">
    <text evidence="1">Belongs to the SecB family.</text>
</comment>
<proteinExistence type="inferred from homology"/>
<accession>B4EA67</accession>
<protein>
    <recommendedName>
        <fullName evidence="1">Protein-export protein SecB</fullName>
    </recommendedName>
</protein>
<sequence length="163" mass="17826">MSDVENQPFFNIQRVYLKDMSLEQPNSPAIFLEQDMPSVEVEVDVKADRLAESVFEVVVSGTVTAKVKDKVAFLIEAKQAGIFDIRNIPDEQLDPLVGIACPTILFPYLRSNIADAITRAGFPPIHLAEINFQALYEQRLAQLQQQAGAAGAPNGAPNGTTLN</sequence>
<organism>
    <name type="scientific">Burkholderia cenocepacia (strain ATCC BAA-245 / DSM 16553 / LMG 16656 / NCTC 13227 / J2315 / CF5610)</name>
    <name type="common">Burkholderia cepacia (strain J2315)</name>
    <dbReference type="NCBI Taxonomy" id="216591"/>
    <lineage>
        <taxon>Bacteria</taxon>
        <taxon>Pseudomonadati</taxon>
        <taxon>Pseudomonadota</taxon>
        <taxon>Betaproteobacteria</taxon>
        <taxon>Burkholderiales</taxon>
        <taxon>Burkholderiaceae</taxon>
        <taxon>Burkholderia</taxon>
        <taxon>Burkholderia cepacia complex</taxon>
    </lineage>
</organism>
<evidence type="ECO:0000255" key="1">
    <source>
        <dbReference type="HAMAP-Rule" id="MF_00821"/>
    </source>
</evidence>
<feature type="chain" id="PRO_1000134367" description="Protein-export protein SecB">
    <location>
        <begin position="1"/>
        <end position="163"/>
    </location>
</feature>
<dbReference type="EMBL" id="AM747720">
    <property type="protein sequence ID" value="CAR51050.1"/>
    <property type="molecule type" value="Genomic_DNA"/>
</dbReference>
<dbReference type="RefSeq" id="WP_006481561.1">
    <property type="nucleotide sequence ID" value="NC_011000.1"/>
</dbReference>
<dbReference type="SMR" id="B4EA67"/>
<dbReference type="GeneID" id="56559441"/>
<dbReference type="KEGG" id="bcj:BCAL0742"/>
<dbReference type="eggNOG" id="COG1952">
    <property type="taxonomic scope" value="Bacteria"/>
</dbReference>
<dbReference type="HOGENOM" id="CLU_111574_1_0_4"/>
<dbReference type="BioCyc" id="BCEN216591:G1G1V-833-MONOMER"/>
<dbReference type="Proteomes" id="UP000001035">
    <property type="component" value="Chromosome 1"/>
</dbReference>
<dbReference type="GO" id="GO:0005737">
    <property type="term" value="C:cytoplasm"/>
    <property type="evidence" value="ECO:0007669"/>
    <property type="project" value="UniProtKB-SubCell"/>
</dbReference>
<dbReference type="GO" id="GO:0051082">
    <property type="term" value="F:unfolded protein binding"/>
    <property type="evidence" value="ECO:0007669"/>
    <property type="project" value="InterPro"/>
</dbReference>
<dbReference type="GO" id="GO:0006457">
    <property type="term" value="P:protein folding"/>
    <property type="evidence" value="ECO:0007669"/>
    <property type="project" value="UniProtKB-UniRule"/>
</dbReference>
<dbReference type="GO" id="GO:0051262">
    <property type="term" value="P:protein tetramerization"/>
    <property type="evidence" value="ECO:0007669"/>
    <property type="project" value="InterPro"/>
</dbReference>
<dbReference type="GO" id="GO:0015031">
    <property type="term" value="P:protein transport"/>
    <property type="evidence" value="ECO:0007669"/>
    <property type="project" value="UniProtKB-UniRule"/>
</dbReference>
<dbReference type="Gene3D" id="3.10.420.10">
    <property type="entry name" value="SecB-like"/>
    <property type="match status" value="1"/>
</dbReference>
<dbReference type="HAMAP" id="MF_00821">
    <property type="entry name" value="SecB"/>
    <property type="match status" value="1"/>
</dbReference>
<dbReference type="InterPro" id="IPR003708">
    <property type="entry name" value="SecB"/>
</dbReference>
<dbReference type="InterPro" id="IPR035958">
    <property type="entry name" value="SecB-like_sf"/>
</dbReference>
<dbReference type="NCBIfam" id="NF004392">
    <property type="entry name" value="PRK05751.1-3"/>
    <property type="match status" value="1"/>
</dbReference>
<dbReference type="NCBIfam" id="NF004394">
    <property type="entry name" value="PRK05751.1-5"/>
    <property type="match status" value="1"/>
</dbReference>
<dbReference type="NCBIfam" id="TIGR00809">
    <property type="entry name" value="secB"/>
    <property type="match status" value="1"/>
</dbReference>
<dbReference type="PANTHER" id="PTHR36918">
    <property type="match status" value="1"/>
</dbReference>
<dbReference type="PANTHER" id="PTHR36918:SF1">
    <property type="entry name" value="PROTEIN-EXPORT PROTEIN SECB"/>
    <property type="match status" value="1"/>
</dbReference>
<dbReference type="Pfam" id="PF02556">
    <property type="entry name" value="SecB"/>
    <property type="match status" value="1"/>
</dbReference>
<dbReference type="PRINTS" id="PR01594">
    <property type="entry name" value="SECBCHAPRONE"/>
</dbReference>
<dbReference type="SUPFAM" id="SSF54611">
    <property type="entry name" value="SecB-like"/>
    <property type="match status" value="1"/>
</dbReference>
<reference key="1">
    <citation type="journal article" date="2009" name="J. Bacteriol.">
        <title>The genome of Burkholderia cenocepacia J2315, an epidemic pathogen of cystic fibrosis patients.</title>
        <authorList>
            <person name="Holden M.T."/>
            <person name="Seth-Smith H.M."/>
            <person name="Crossman L.C."/>
            <person name="Sebaihia M."/>
            <person name="Bentley S.D."/>
            <person name="Cerdeno-Tarraga A.M."/>
            <person name="Thomson N.R."/>
            <person name="Bason N."/>
            <person name="Quail M.A."/>
            <person name="Sharp S."/>
            <person name="Cherevach I."/>
            <person name="Churcher C."/>
            <person name="Goodhead I."/>
            <person name="Hauser H."/>
            <person name="Holroyd N."/>
            <person name="Mungall K."/>
            <person name="Scott P."/>
            <person name="Walker D."/>
            <person name="White B."/>
            <person name="Rose H."/>
            <person name="Iversen P."/>
            <person name="Mil-Homens D."/>
            <person name="Rocha E.P."/>
            <person name="Fialho A.M."/>
            <person name="Baldwin A."/>
            <person name="Dowson C."/>
            <person name="Barrell B.G."/>
            <person name="Govan J.R."/>
            <person name="Vandamme P."/>
            <person name="Hart C.A."/>
            <person name="Mahenthiralingam E."/>
            <person name="Parkhill J."/>
        </authorList>
    </citation>
    <scope>NUCLEOTIDE SEQUENCE [LARGE SCALE GENOMIC DNA]</scope>
    <source>
        <strain>ATCC BAA-245 / DSM 16553 / LMG 16656 / NCTC 13227 / J2315 / CF5610</strain>
    </source>
</reference>
<keyword id="KW-0143">Chaperone</keyword>
<keyword id="KW-0963">Cytoplasm</keyword>
<keyword id="KW-0653">Protein transport</keyword>
<keyword id="KW-0811">Translocation</keyword>
<keyword id="KW-0813">Transport</keyword>
<name>SECB_BURCJ</name>